<name>CLZ20_COCLU</name>
<evidence type="ECO:0000250" key="1">
    <source>
        <dbReference type="UniProtKB" id="P29704"/>
    </source>
</evidence>
<evidence type="ECO:0000255" key="2"/>
<evidence type="ECO:0000255" key="3">
    <source>
        <dbReference type="PROSITE-ProRule" id="PRU00498"/>
    </source>
</evidence>
<evidence type="ECO:0000269" key="4">
    <source>
    </source>
</evidence>
<evidence type="ECO:0000303" key="5">
    <source>
    </source>
</evidence>
<evidence type="ECO:0000305" key="6"/>
<evidence type="ECO:0000305" key="7">
    <source>
    </source>
</evidence>
<accession>A0A345BJQ0</accession>
<proteinExistence type="inferred from homology"/>
<protein>
    <recommendedName>
        <fullName evidence="5">Squalene synthase clz20</fullName>
        <shortName evidence="6">SQS clz20</shortName>
        <shortName evidence="5">SS clz20</shortName>
        <ecNumber evidence="7">2.5.1.21</ecNumber>
    </recommendedName>
    <alternativeName>
        <fullName evidence="5">Squalestatin S1 biosynthesis cluster protein clz20</fullName>
    </alternativeName>
    <alternativeName>
        <fullName evidence="5">Zaragozic acid A biosynthesis cluster protein 20</fullName>
    </alternativeName>
</protein>
<reference key="1">
    <citation type="journal article" date="2017" name="Org. Lett.">
        <title>Identification and heterologous production of a benzoyl-primed tricarboxylic acid polyketide intermediate from the zaragozic acid A biosynthetic pathway.</title>
        <authorList>
            <person name="Liu N."/>
            <person name="Hung Y.S."/>
            <person name="Gao S.S."/>
            <person name="Hang L."/>
            <person name="Zou Y."/>
            <person name="Chooi Y.H."/>
            <person name="Tang Y."/>
        </authorList>
    </citation>
    <scope>NUCLEOTIDE SEQUENCE [GENOMIC DNA]</scope>
    <scope>FUNCTION</scope>
    <source>
        <strain>ATCC 74067</strain>
    </source>
</reference>
<sequence>MVSTRGVLYYLLRPKELRPILQWKALHGLGHQRDEKNESPDVKACYQYLALTSRSFAAVCQQLDRELLMPICIFYLILRGLDTIEDDMTLSKEVKEPLLRNFYTTIYDQTWTFNDSGTDEKDRELLVHFDCVAREFHKIKDEYKIIITDITKQMGNGMADFVVSGDLTGIQKIKDYELYCHYVAGVVGDGLTRLFVEANVADPSLLKNPRLIESMGQFLQQTNIIRDVREDHDEVRHFWPKEVWSKYAQDFDHLVSPKPQDRKKALQCSSEMVLMALNRADDCLNYMAGVREQTVFNFVAIPQSMAIATLELCFQNPAIFDKNIKITKGATCQLMIDSTQDLQHVCQAFRRYARRIKKKNHPEDPHFHDINAACNKIDRFIDDRYPNLQDEQAKADTMYLAVLVLGVFGVVAAIL</sequence>
<feature type="chain" id="PRO_0000452640" description="Squalene synthase clz20">
    <location>
        <begin position="1"/>
        <end position="415" status="greater than"/>
    </location>
</feature>
<feature type="transmembrane region" description="Helical" evidence="2">
    <location>
        <begin position="395"/>
        <end position="415"/>
    </location>
</feature>
<feature type="glycosylation site" description="N-linked (GlcNAc...) asparagine" evidence="3">
    <location>
        <position position="114"/>
    </location>
</feature>
<feature type="non-terminal residue" evidence="6">
    <location>
        <position position="415"/>
    </location>
</feature>
<organism>
    <name type="scientific">Cochliobolus lunatus</name>
    <name type="common">Filamentous fungus</name>
    <name type="synonym">Curvularia lunata</name>
    <dbReference type="NCBI Taxonomy" id="5503"/>
    <lineage>
        <taxon>Eukaryota</taxon>
        <taxon>Fungi</taxon>
        <taxon>Dikarya</taxon>
        <taxon>Ascomycota</taxon>
        <taxon>Pezizomycotina</taxon>
        <taxon>Dothideomycetes</taxon>
        <taxon>Pleosporomycetidae</taxon>
        <taxon>Pleosporales</taxon>
        <taxon>Pleosporineae</taxon>
        <taxon>Pleosporaceae</taxon>
        <taxon>Curvularia</taxon>
    </lineage>
</organism>
<dbReference type="EC" id="2.5.1.21" evidence="7"/>
<dbReference type="EMBL" id="MF806533">
    <property type="protein sequence ID" value="AXF50663.1"/>
    <property type="molecule type" value="Genomic_DNA"/>
</dbReference>
<dbReference type="SMR" id="A0A345BJQ0"/>
<dbReference type="GlyCosmos" id="A0A345BJQ0">
    <property type="glycosylation" value="1 site, No reported glycans"/>
</dbReference>
<dbReference type="UniPathway" id="UPA00767">
    <property type="reaction ID" value="UER00751"/>
</dbReference>
<dbReference type="GO" id="GO:0005789">
    <property type="term" value="C:endoplasmic reticulum membrane"/>
    <property type="evidence" value="ECO:0007669"/>
    <property type="project" value="TreeGrafter"/>
</dbReference>
<dbReference type="GO" id="GO:0051996">
    <property type="term" value="F:squalene synthase [NAD(P)H] activity"/>
    <property type="evidence" value="ECO:0007669"/>
    <property type="project" value="UniProtKB-EC"/>
</dbReference>
<dbReference type="GO" id="GO:0006696">
    <property type="term" value="P:ergosterol biosynthetic process"/>
    <property type="evidence" value="ECO:0007669"/>
    <property type="project" value="TreeGrafter"/>
</dbReference>
<dbReference type="GO" id="GO:0045338">
    <property type="term" value="P:farnesyl diphosphate metabolic process"/>
    <property type="evidence" value="ECO:0007669"/>
    <property type="project" value="InterPro"/>
</dbReference>
<dbReference type="GO" id="GO:0008299">
    <property type="term" value="P:isoprenoid biosynthetic process"/>
    <property type="evidence" value="ECO:0007669"/>
    <property type="project" value="UniProtKB-KW"/>
</dbReference>
<dbReference type="CDD" id="cd00683">
    <property type="entry name" value="Trans_IPPS_HH"/>
    <property type="match status" value="1"/>
</dbReference>
<dbReference type="FunFam" id="1.10.600.10:FF:000003">
    <property type="entry name" value="Farnesyl-diphosphate farnesyltransferase 1"/>
    <property type="match status" value="1"/>
</dbReference>
<dbReference type="Gene3D" id="1.10.600.10">
    <property type="entry name" value="Farnesyl Diphosphate Synthase"/>
    <property type="match status" value="1"/>
</dbReference>
<dbReference type="InterPro" id="IPR008949">
    <property type="entry name" value="Isoprenoid_synthase_dom_sf"/>
</dbReference>
<dbReference type="InterPro" id="IPR002060">
    <property type="entry name" value="Squ/phyt_synthse"/>
</dbReference>
<dbReference type="InterPro" id="IPR006449">
    <property type="entry name" value="Squal_synth-like"/>
</dbReference>
<dbReference type="InterPro" id="IPR019845">
    <property type="entry name" value="Squalene/phytoene_synthase_CS"/>
</dbReference>
<dbReference type="InterPro" id="IPR044844">
    <property type="entry name" value="Trans_IPPS_euk-type"/>
</dbReference>
<dbReference type="InterPro" id="IPR033904">
    <property type="entry name" value="Trans_IPPS_HH"/>
</dbReference>
<dbReference type="NCBIfam" id="TIGR01559">
    <property type="entry name" value="squal_synth"/>
    <property type="match status" value="1"/>
</dbReference>
<dbReference type="PANTHER" id="PTHR11626">
    <property type="entry name" value="FARNESYL-DIPHOSPHATE FARNESYLTRANSFERASE"/>
    <property type="match status" value="1"/>
</dbReference>
<dbReference type="PANTHER" id="PTHR11626:SF2">
    <property type="entry name" value="SQUALENE SYNTHASE"/>
    <property type="match status" value="1"/>
</dbReference>
<dbReference type="Pfam" id="PF00494">
    <property type="entry name" value="SQS_PSY"/>
    <property type="match status" value="1"/>
</dbReference>
<dbReference type="SFLD" id="SFLDS00005">
    <property type="entry name" value="Isoprenoid_Synthase_Type_I"/>
    <property type="match status" value="1"/>
</dbReference>
<dbReference type="SFLD" id="SFLDG01018">
    <property type="entry name" value="Squalene/Phytoene_Synthase_Lik"/>
    <property type="match status" value="1"/>
</dbReference>
<dbReference type="SUPFAM" id="SSF48576">
    <property type="entry name" value="Terpenoid synthases"/>
    <property type="match status" value="1"/>
</dbReference>
<dbReference type="PROSITE" id="PS01044">
    <property type="entry name" value="SQUALEN_PHYTOEN_SYN_1"/>
    <property type="match status" value="1"/>
</dbReference>
<dbReference type="PROSITE" id="PS01045">
    <property type="entry name" value="SQUALEN_PHYTOEN_SYN_2"/>
    <property type="match status" value="1"/>
</dbReference>
<keyword id="KW-0325">Glycoprotein</keyword>
<keyword id="KW-0414">Isoprene biosynthesis</keyword>
<keyword id="KW-0444">Lipid biosynthesis</keyword>
<keyword id="KW-0443">Lipid metabolism</keyword>
<keyword id="KW-0460">Magnesium</keyword>
<keyword id="KW-0472">Membrane</keyword>
<keyword id="KW-0511">Multifunctional enzyme</keyword>
<keyword id="KW-0521">NADP</keyword>
<keyword id="KW-0752">Steroid biosynthesis</keyword>
<keyword id="KW-0753">Steroid metabolism</keyword>
<keyword id="KW-0756">Sterol biosynthesis</keyword>
<keyword id="KW-1207">Sterol metabolism</keyword>
<keyword id="KW-0808">Transferase</keyword>
<keyword id="KW-0812">Transmembrane</keyword>
<keyword id="KW-1133">Transmembrane helix</keyword>
<comment type="function">
    <text evidence="1 4 7">Squalene synthase; part of the gene cluster that mediates the biosynthesis of squalestatin S1 (SQS1, also known as zaragozic acid A), a heavily oxidized fungal polyketide that offers potent cholesterol lowering activity by targeting squalene synthase (SS) (PubMed:28605916). Catalyzes the condensation of 2 two farnesyl pyrophosphate moieties to form squalene (By similarity). The presence of a gene encoding a squalene synthase supports the identification of the cluster as being responsible for SQS1 production and suggests a likely mechanism for self-resistance (Probable).</text>
</comment>
<comment type="catalytic activity">
    <reaction evidence="1">
        <text>2 (2E,6E)-farnesyl diphosphate + NADH + H(+) = squalene + 2 diphosphate + NAD(+)</text>
        <dbReference type="Rhea" id="RHEA:32299"/>
        <dbReference type="ChEBI" id="CHEBI:15378"/>
        <dbReference type="ChEBI" id="CHEBI:15440"/>
        <dbReference type="ChEBI" id="CHEBI:33019"/>
        <dbReference type="ChEBI" id="CHEBI:57540"/>
        <dbReference type="ChEBI" id="CHEBI:57945"/>
        <dbReference type="ChEBI" id="CHEBI:175763"/>
        <dbReference type="EC" id="2.5.1.21"/>
    </reaction>
</comment>
<comment type="catalytic activity">
    <reaction evidence="1">
        <text>2 (2E,6E)-farnesyl diphosphate + NADPH + H(+) = squalene + 2 diphosphate + NADP(+)</text>
        <dbReference type="Rhea" id="RHEA:32295"/>
        <dbReference type="ChEBI" id="CHEBI:15378"/>
        <dbReference type="ChEBI" id="CHEBI:15440"/>
        <dbReference type="ChEBI" id="CHEBI:33019"/>
        <dbReference type="ChEBI" id="CHEBI:57783"/>
        <dbReference type="ChEBI" id="CHEBI:58349"/>
        <dbReference type="ChEBI" id="CHEBI:175763"/>
        <dbReference type="EC" id="2.5.1.21"/>
    </reaction>
</comment>
<comment type="cofactor">
    <cofactor evidence="1">
        <name>Mg(2+)</name>
        <dbReference type="ChEBI" id="CHEBI:18420"/>
    </cofactor>
</comment>
<comment type="pathway">
    <text evidence="1">Terpene metabolism; lanosterol biosynthesis; lanosterol from farnesyl diphosphate: step 1/3.</text>
</comment>
<comment type="subcellular location">
    <subcellularLocation>
        <location evidence="2">Membrane</location>
        <topology evidence="2">Single-pass membrane protein</topology>
    </subcellularLocation>
</comment>
<comment type="similarity">
    <text evidence="6">Belongs to the phytoene/squalene synthase family.</text>
</comment>
<gene>
    <name evidence="5" type="primary">clz20</name>
</gene>